<evidence type="ECO:0000255" key="1">
    <source>
        <dbReference type="HAMAP-Rule" id="MF_00808"/>
    </source>
</evidence>
<reference key="1">
    <citation type="journal article" date="2006" name="Mol. Genet. Genomics">
        <title>The chloroplast genome of Nicotiana sylvestris and Nicotiana tomentosiformis: complete sequencing confirms that the Nicotiana sylvestris progenitor is the maternal genome donor of Nicotiana tabacum.</title>
        <authorList>
            <person name="Yukawa M."/>
            <person name="Tsudzuki T."/>
            <person name="Sugiura M."/>
        </authorList>
    </citation>
    <scope>NUCLEOTIDE SEQUENCE [LARGE SCALE GENOMIC DNA]</scope>
</reference>
<comment type="function">
    <text evidence="1">Found at the monomer-monomer interface of the photosystem II (PS II) dimer, plays a role in assembly and dimerization of PSII. PSII is a light-driven water plastoquinone oxidoreductase, using light energy to abstract electrons from H(2)O, generating a proton gradient subsequently used for ATP formation.</text>
</comment>
<comment type="subunit">
    <text evidence="1">PSII is composed of 1 copy each of membrane proteins PsbA, PsbB, PsbC, PsbD, PsbE, PsbF, PsbH, PsbI, PsbJ, PsbK, PsbL, PsbM, PsbT, PsbY, PsbZ, Psb30/Ycf12, at least 3 peripheral proteins of the oxygen-evolving complex and a large number of cofactors. It forms dimeric complexes.</text>
</comment>
<comment type="subcellular location">
    <subcellularLocation>
        <location evidence="1">Plastid</location>
        <location evidence="1">Chloroplast thylakoid membrane</location>
        <topology evidence="1">Single-pass membrane protein</topology>
    </subcellularLocation>
</comment>
<comment type="similarity">
    <text evidence="1">Belongs to the PsbT family.</text>
</comment>
<proteinExistence type="inferred from homology"/>
<protein>
    <recommendedName>
        <fullName evidence="1">Photosystem II reaction center protein T</fullName>
        <shortName evidence="1">PSII-T</shortName>
    </recommendedName>
</protein>
<accession>Q3C1K2</accession>
<organism>
    <name type="scientific">Nicotiana sylvestris</name>
    <name type="common">Wood tobacco</name>
    <name type="synonym">South American tobacco</name>
    <dbReference type="NCBI Taxonomy" id="4096"/>
    <lineage>
        <taxon>Eukaryota</taxon>
        <taxon>Viridiplantae</taxon>
        <taxon>Streptophyta</taxon>
        <taxon>Embryophyta</taxon>
        <taxon>Tracheophyta</taxon>
        <taxon>Spermatophyta</taxon>
        <taxon>Magnoliopsida</taxon>
        <taxon>eudicotyledons</taxon>
        <taxon>Gunneridae</taxon>
        <taxon>Pentapetalae</taxon>
        <taxon>asterids</taxon>
        <taxon>lamiids</taxon>
        <taxon>Solanales</taxon>
        <taxon>Solanaceae</taxon>
        <taxon>Nicotianoideae</taxon>
        <taxon>Nicotianeae</taxon>
        <taxon>Nicotiana</taxon>
    </lineage>
</organism>
<keyword id="KW-0150">Chloroplast</keyword>
<keyword id="KW-0472">Membrane</keyword>
<keyword id="KW-0602">Photosynthesis</keyword>
<keyword id="KW-0604">Photosystem II</keyword>
<keyword id="KW-0934">Plastid</keyword>
<keyword id="KW-1185">Reference proteome</keyword>
<keyword id="KW-0793">Thylakoid</keyword>
<keyword id="KW-0812">Transmembrane</keyword>
<keyword id="KW-1133">Transmembrane helix</keyword>
<name>PSBT_NICSY</name>
<dbReference type="EMBL" id="AB237912">
    <property type="protein sequence ID" value="BAE46681.1"/>
    <property type="molecule type" value="Genomic_DNA"/>
</dbReference>
<dbReference type="RefSeq" id="YP_358705.1">
    <property type="nucleotide sequence ID" value="NC_007500.1"/>
</dbReference>
<dbReference type="SMR" id="Q3C1K2"/>
<dbReference type="GeneID" id="3735114"/>
<dbReference type="KEGG" id="nsy:3735114"/>
<dbReference type="OrthoDB" id="20058at4085"/>
<dbReference type="Proteomes" id="UP000189701">
    <property type="component" value="Chloroplast Pltd"/>
</dbReference>
<dbReference type="GO" id="GO:0009535">
    <property type="term" value="C:chloroplast thylakoid membrane"/>
    <property type="evidence" value="ECO:0007669"/>
    <property type="project" value="UniProtKB-SubCell"/>
</dbReference>
<dbReference type="GO" id="GO:0009539">
    <property type="term" value="C:photosystem II reaction center"/>
    <property type="evidence" value="ECO:0007669"/>
    <property type="project" value="InterPro"/>
</dbReference>
<dbReference type="GO" id="GO:0015979">
    <property type="term" value="P:photosynthesis"/>
    <property type="evidence" value="ECO:0007669"/>
    <property type="project" value="UniProtKB-UniRule"/>
</dbReference>
<dbReference type="HAMAP" id="MF_00808">
    <property type="entry name" value="PSII_PsbT"/>
    <property type="match status" value="1"/>
</dbReference>
<dbReference type="InterPro" id="IPR001743">
    <property type="entry name" value="PSII_PsbT"/>
</dbReference>
<dbReference type="InterPro" id="IPR037268">
    <property type="entry name" value="PSII_PsbT_sf"/>
</dbReference>
<dbReference type="PANTHER" id="PTHR36411">
    <property type="match status" value="1"/>
</dbReference>
<dbReference type="PANTHER" id="PTHR36411:SF2">
    <property type="entry name" value="PHOTOSYSTEM II REACTION CENTER PROTEIN T"/>
    <property type="match status" value="1"/>
</dbReference>
<dbReference type="Pfam" id="PF01405">
    <property type="entry name" value="PsbT"/>
    <property type="match status" value="1"/>
</dbReference>
<dbReference type="SUPFAM" id="SSF161029">
    <property type="entry name" value="Photosystem II reaction center protein T, PsbT"/>
    <property type="match status" value="1"/>
</dbReference>
<gene>
    <name evidence="1" type="primary">psbT</name>
</gene>
<feature type="chain" id="PRO_0000276302" description="Photosystem II reaction center protein T">
    <location>
        <begin position="1"/>
        <end position="34"/>
    </location>
</feature>
<feature type="transmembrane region" description="Helical" evidence="1">
    <location>
        <begin position="3"/>
        <end position="23"/>
    </location>
</feature>
<geneLocation type="chloroplast"/>
<sequence>MEALVYTFLLVSTLGIIFFAIFFREPPKVPTKKN</sequence>